<accession>P0ACU9</accession>
<accession>P36656</accession>
<accession>Q47128</accession>
<sequence>MQREDVLGEALKLLELQGIANTTLEMVAERVDYPLDELRRFWPDKEAILYDALRYLSQQIDVWRRQLMLDETQTAEQKLLARYQALSECVKNNRYPGCLFIAACTFYPDPGHPIHQLADQQKSAAYDFTHELLTTLEVDDPAMVAKQMELVLEGCLSRMLVNRSQADVDTAHRLAEDILRFARCRQGGALT</sequence>
<proteinExistence type="predicted"/>
<feature type="chain" id="PRO_0000070646" description="HTH-type transcriptional regulator YjdC">
    <location>
        <begin position="1"/>
        <end position="191"/>
    </location>
</feature>
<feature type="domain" description="HTH tetR-type" evidence="1">
    <location>
        <begin position="1"/>
        <end position="60"/>
    </location>
</feature>
<organism>
    <name type="scientific">Shigella flexneri</name>
    <dbReference type="NCBI Taxonomy" id="623"/>
    <lineage>
        <taxon>Bacteria</taxon>
        <taxon>Pseudomonadati</taxon>
        <taxon>Pseudomonadota</taxon>
        <taxon>Gammaproteobacteria</taxon>
        <taxon>Enterobacterales</taxon>
        <taxon>Enterobacteriaceae</taxon>
        <taxon>Shigella</taxon>
    </lineage>
</organism>
<keyword id="KW-0238">DNA-binding</keyword>
<keyword id="KW-1185">Reference proteome</keyword>
<keyword id="KW-0804">Transcription</keyword>
<keyword id="KW-0805">Transcription regulation</keyword>
<gene>
    <name type="primary">yjdC</name>
    <name type="ordered locus">SF4289</name>
    <name type="ordered locus">S4556</name>
</gene>
<name>YJDC_SHIFL</name>
<evidence type="ECO:0000255" key="1">
    <source>
        <dbReference type="PROSITE-ProRule" id="PRU00335"/>
    </source>
</evidence>
<dbReference type="EMBL" id="AE005674">
    <property type="protein sequence ID" value="AAN45707.1"/>
    <property type="molecule type" value="Genomic_DNA"/>
</dbReference>
<dbReference type="EMBL" id="AE014073">
    <property type="protein sequence ID" value="AAP19493.1"/>
    <property type="molecule type" value="Genomic_DNA"/>
</dbReference>
<dbReference type="RefSeq" id="NP_710000.1">
    <property type="nucleotide sequence ID" value="NC_004337.2"/>
</dbReference>
<dbReference type="RefSeq" id="WP_001188520.1">
    <property type="nucleotide sequence ID" value="NZ_WPGW01000108.1"/>
</dbReference>
<dbReference type="SMR" id="P0ACU9"/>
<dbReference type="STRING" id="198214.SF4289"/>
<dbReference type="PaxDb" id="198214-SF4289"/>
<dbReference type="DNASU" id="1080763"/>
<dbReference type="GeneID" id="1026581"/>
<dbReference type="KEGG" id="sfl:SF4289"/>
<dbReference type="KEGG" id="sfx:S4556"/>
<dbReference type="PATRIC" id="fig|198214.7.peg.5059"/>
<dbReference type="HOGENOM" id="CLU_1389758_0_0_6"/>
<dbReference type="Proteomes" id="UP000001006">
    <property type="component" value="Chromosome"/>
</dbReference>
<dbReference type="Proteomes" id="UP000002673">
    <property type="component" value="Chromosome"/>
</dbReference>
<dbReference type="GO" id="GO:0003677">
    <property type="term" value="F:DNA binding"/>
    <property type="evidence" value="ECO:0007669"/>
    <property type="project" value="UniProtKB-KW"/>
</dbReference>
<dbReference type="Gene3D" id="1.10.357.10">
    <property type="entry name" value="Tetracycline Repressor, domain 2"/>
    <property type="match status" value="1"/>
</dbReference>
<dbReference type="InterPro" id="IPR009057">
    <property type="entry name" value="Homeodomain-like_sf"/>
</dbReference>
<dbReference type="InterPro" id="IPR001647">
    <property type="entry name" value="HTH_TetR"/>
</dbReference>
<dbReference type="InterPro" id="IPR036271">
    <property type="entry name" value="Tet_transcr_reg_TetR-rel_C_sf"/>
</dbReference>
<dbReference type="NCBIfam" id="NF008647">
    <property type="entry name" value="PRK11640.1"/>
    <property type="match status" value="1"/>
</dbReference>
<dbReference type="NCBIfam" id="NF047866">
    <property type="entry name" value="TF_DicD_YjdC"/>
    <property type="match status" value="1"/>
</dbReference>
<dbReference type="PANTHER" id="PTHR47506:SF1">
    <property type="entry name" value="HTH-TYPE TRANSCRIPTIONAL REGULATOR YJDC"/>
    <property type="match status" value="1"/>
</dbReference>
<dbReference type="PANTHER" id="PTHR47506">
    <property type="entry name" value="TRANSCRIPTIONAL REGULATORY PROTEIN"/>
    <property type="match status" value="1"/>
</dbReference>
<dbReference type="SUPFAM" id="SSF46689">
    <property type="entry name" value="Homeodomain-like"/>
    <property type="match status" value="1"/>
</dbReference>
<dbReference type="SUPFAM" id="SSF48498">
    <property type="entry name" value="Tetracyclin repressor-like, C-terminal domain"/>
    <property type="match status" value="1"/>
</dbReference>
<dbReference type="PROSITE" id="PS50977">
    <property type="entry name" value="HTH_TETR_2"/>
    <property type="match status" value="1"/>
</dbReference>
<protein>
    <recommendedName>
        <fullName>HTH-type transcriptional regulator YjdC</fullName>
    </recommendedName>
</protein>
<reference key="1">
    <citation type="journal article" date="2002" name="Nucleic Acids Res.">
        <title>Genome sequence of Shigella flexneri 2a: insights into pathogenicity through comparison with genomes of Escherichia coli K12 and O157.</title>
        <authorList>
            <person name="Jin Q."/>
            <person name="Yuan Z."/>
            <person name="Xu J."/>
            <person name="Wang Y."/>
            <person name="Shen Y."/>
            <person name="Lu W."/>
            <person name="Wang J."/>
            <person name="Liu H."/>
            <person name="Yang J."/>
            <person name="Yang F."/>
            <person name="Zhang X."/>
            <person name="Zhang J."/>
            <person name="Yang G."/>
            <person name="Wu H."/>
            <person name="Qu D."/>
            <person name="Dong J."/>
            <person name="Sun L."/>
            <person name="Xue Y."/>
            <person name="Zhao A."/>
            <person name="Gao Y."/>
            <person name="Zhu J."/>
            <person name="Kan B."/>
            <person name="Ding K."/>
            <person name="Chen S."/>
            <person name="Cheng H."/>
            <person name="Yao Z."/>
            <person name="He B."/>
            <person name="Chen R."/>
            <person name="Ma D."/>
            <person name="Qiang B."/>
            <person name="Wen Y."/>
            <person name="Hou Y."/>
            <person name="Yu J."/>
        </authorList>
    </citation>
    <scope>NUCLEOTIDE SEQUENCE [LARGE SCALE GENOMIC DNA]</scope>
    <source>
        <strain>301 / Serotype 2a</strain>
    </source>
</reference>
<reference key="2">
    <citation type="journal article" date="2003" name="Infect. Immun.">
        <title>Complete genome sequence and comparative genomics of Shigella flexneri serotype 2a strain 2457T.</title>
        <authorList>
            <person name="Wei J."/>
            <person name="Goldberg M.B."/>
            <person name="Burland V."/>
            <person name="Venkatesan M.M."/>
            <person name="Deng W."/>
            <person name="Fournier G."/>
            <person name="Mayhew G.F."/>
            <person name="Plunkett G. III"/>
            <person name="Rose D.J."/>
            <person name="Darling A."/>
            <person name="Mau B."/>
            <person name="Perna N.T."/>
            <person name="Payne S.M."/>
            <person name="Runyen-Janecky L.J."/>
            <person name="Zhou S."/>
            <person name="Schwartz D.C."/>
            <person name="Blattner F.R."/>
        </authorList>
    </citation>
    <scope>NUCLEOTIDE SEQUENCE [LARGE SCALE GENOMIC DNA]</scope>
    <source>
        <strain>ATCC 700930 / 2457T / Serotype 2a</strain>
    </source>
</reference>